<comment type="catalytic activity">
    <reaction evidence="1">
        <text>(2R)-3-phosphoglycerate + ATP = (2R)-3-phospho-glyceroyl phosphate + ADP</text>
        <dbReference type="Rhea" id="RHEA:14801"/>
        <dbReference type="ChEBI" id="CHEBI:30616"/>
        <dbReference type="ChEBI" id="CHEBI:57604"/>
        <dbReference type="ChEBI" id="CHEBI:58272"/>
        <dbReference type="ChEBI" id="CHEBI:456216"/>
        <dbReference type="EC" id="2.7.2.3"/>
    </reaction>
</comment>
<comment type="pathway">
    <text evidence="1">Carbohydrate degradation; glycolysis; pyruvate from D-glyceraldehyde 3-phosphate: step 2/5.</text>
</comment>
<comment type="subunit">
    <text evidence="1">Monomer.</text>
</comment>
<comment type="subcellular location">
    <subcellularLocation>
        <location evidence="1">Cytoplasm</location>
    </subcellularLocation>
</comment>
<comment type="similarity">
    <text evidence="1">Belongs to the phosphoglycerate kinase family.</text>
</comment>
<keyword id="KW-0067">ATP-binding</keyword>
<keyword id="KW-0963">Cytoplasm</keyword>
<keyword id="KW-0324">Glycolysis</keyword>
<keyword id="KW-0418">Kinase</keyword>
<keyword id="KW-0547">Nucleotide-binding</keyword>
<keyword id="KW-1185">Reference proteome</keyword>
<keyword id="KW-0808">Transferase</keyword>
<feature type="chain" id="PRO_1000058014" description="Phosphoglycerate kinase">
    <location>
        <begin position="1"/>
        <end position="391"/>
    </location>
</feature>
<feature type="binding site" evidence="1">
    <location>
        <begin position="21"/>
        <end position="23"/>
    </location>
    <ligand>
        <name>substrate</name>
    </ligand>
</feature>
<feature type="binding site" evidence="1">
    <location>
        <position position="36"/>
    </location>
    <ligand>
        <name>substrate</name>
    </ligand>
</feature>
<feature type="binding site" evidence="1">
    <location>
        <begin position="59"/>
        <end position="62"/>
    </location>
    <ligand>
        <name>substrate</name>
    </ligand>
</feature>
<feature type="binding site" evidence="1">
    <location>
        <position position="113"/>
    </location>
    <ligand>
        <name>substrate</name>
    </ligand>
</feature>
<feature type="binding site" evidence="1">
    <location>
        <position position="146"/>
    </location>
    <ligand>
        <name>substrate</name>
    </ligand>
</feature>
<feature type="binding site" evidence="1">
    <location>
        <position position="197"/>
    </location>
    <ligand>
        <name>ATP</name>
        <dbReference type="ChEBI" id="CHEBI:30616"/>
    </ligand>
</feature>
<feature type="binding site" evidence="1">
    <location>
        <position position="319"/>
    </location>
    <ligand>
        <name>ATP</name>
        <dbReference type="ChEBI" id="CHEBI:30616"/>
    </ligand>
</feature>
<feature type="binding site" evidence="1">
    <location>
        <begin position="345"/>
        <end position="348"/>
    </location>
    <ligand>
        <name>ATP</name>
        <dbReference type="ChEBI" id="CHEBI:30616"/>
    </ligand>
</feature>
<sequence>MAFKRMTDIDLAGKRVLIREDFNVPVKDGRVTSDARIRAALPTIRHALDAGAAVMLMSHLGRPTEGEYAEEFSMKPVADRLSELLGQPVTLVKDYLGGADPAVGSVVLFENVRFNKGEKKDDEVLARQLAALCDVYVMDAFGTAHRAEASTHGVGKYAPTACAGLLLATELDALGRALHDPARPLVAIVGGSKVSTKLTVLDSLSQVVDQLIVGGGIANTFIKAAGFNVGKSLYEEDLVAEARRLMEAAKAKGGEIPVPVDVVVGKRFDAAEPAMVKSVADIAEDDMILDIGPETSRRYAEFIGRAGTVVWNGPVGVFEFDQFGEGTRRLGLAIAESHAFSIAGGGDTLAAIDKYGIADRISYISTGGGAFLEFLEGKQLPAVAMLESRAD</sequence>
<accession>Q606J5</accession>
<protein>
    <recommendedName>
        <fullName evidence="1">Phosphoglycerate kinase</fullName>
        <ecNumber evidence="1">2.7.2.3</ecNumber>
    </recommendedName>
</protein>
<evidence type="ECO:0000255" key="1">
    <source>
        <dbReference type="HAMAP-Rule" id="MF_00145"/>
    </source>
</evidence>
<organism>
    <name type="scientific">Methylococcus capsulatus (strain ATCC 33009 / NCIMB 11132 / Bath)</name>
    <dbReference type="NCBI Taxonomy" id="243233"/>
    <lineage>
        <taxon>Bacteria</taxon>
        <taxon>Pseudomonadati</taxon>
        <taxon>Pseudomonadota</taxon>
        <taxon>Gammaproteobacteria</taxon>
        <taxon>Methylococcales</taxon>
        <taxon>Methylococcaceae</taxon>
        <taxon>Methylococcus</taxon>
    </lineage>
</organism>
<name>PGK_METCA</name>
<proteinExistence type="inferred from homology"/>
<reference key="1">
    <citation type="journal article" date="2004" name="PLoS Biol.">
        <title>Genomic insights into methanotrophy: the complete genome sequence of Methylococcus capsulatus (Bath).</title>
        <authorList>
            <person name="Ward N.L."/>
            <person name="Larsen O."/>
            <person name="Sakwa J."/>
            <person name="Bruseth L."/>
            <person name="Khouri H.M."/>
            <person name="Durkin A.S."/>
            <person name="Dimitrov G."/>
            <person name="Jiang L."/>
            <person name="Scanlan D."/>
            <person name="Kang K.H."/>
            <person name="Lewis M.R."/>
            <person name="Nelson K.E."/>
            <person name="Methe B.A."/>
            <person name="Wu M."/>
            <person name="Heidelberg J.F."/>
            <person name="Paulsen I.T."/>
            <person name="Fouts D.E."/>
            <person name="Ravel J."/>
            <person name="Tettelin H."/>
            <person name="Ren Q."/>
            <person name="Read T.D."/>
            <person name="DeBoy R.T."/>
            <person name="Seshadri R."/>
            <person name="Salzberg S.L."/>
            <person name="Jensen H.B."/>
            <person name="Birkeland N.K."/>
            <person name="Nelson W.C."/>
            <person name="Dodson R.J."/>
            <person name="Grindhaug S.H."/>
            <person name="Holt I.E."/>
            <person name="Eidhammer I."/>
            <person name="Jonasen I."/>
            <person name="Vanaken S."/>
            <person name="Utterback T.R."/>
            <person name="Feldblyum T.V."/>
            <person name="Fraser C.M."/>
            <person name="Lillehaug J.R."/>
            <person name="Eisen J.A."/>
        </authorList>
    </citation>
    <scope>NUCLEOTIDE SEQUENCE [LARGE SCALE GENOMIC DNA]</scope>
    <source>
        <strain>ATCC 33009 / NCIMB 11132 / Bath</strain>
    </source>
</reference>
<dbReference type="EC" id="2.7.2.3" evidence="1"/>
<dbReference type="EMBL" id="AE017282">
    <property type="protein sequence ID" value="AAU91741.1"/>
    <property type="molecule type" value="Genomic_DNA"/>
</dbReference>
<dbReference type="RefSeq" id="WP_010961266.1">
    <property type="nucleotide sequence ID" value="NC_002977.6"/>
</dbReference>
<dbReference type="SMR" id="Q606J5"/>
<dbReference type="STRING" id="243233.MCA2021"/>
<dbReference type="GeneID" id="88224249"/>
<dbReference type="KEGG" id="mca:MCA2021"/>
<dbReference type="eggNOG" id="COG0126">
    <property type="taxonomic scope" value="Bacteria"/>
</dbReference>
<dbReference type="HOGENOM" id="CLU_025427_0_2_6"/>
<dbReference type="UniPathway" id="UPA00109">
    <property type="reaction ID" value="UER00185"/>
</dbReference>
<dbReference type="Proteomes" id="UP000006821">
    <property type="component" value="Chromosome"/>
</dbReference>
<dbReference type="GO" id="GO:0005829">
    <property type="term" value="C:cytosol"/>
    <property type="evidence" value="ECO:0007669"/>
    <property type="project" value="TreeGrafter"/>
</dbReference>
<dbReference type="GO" id="GO:0043531">
    <property type="term" value="F:ADP binding"/>
    <property type="evidence" value="ECO:0007669"/>
    <property type="project" value="TreeGrafter"/>
</dbReference>
<dbReference type="GO" id="GO:0005524">
    <property type="term" value="F:ATP binding"/>
    <property type="evidence" value="ECO:0007669"/>
    <property type="project" value="UniProtKB-KW"/>
</dbReference>
<dbReference type="GO" id="GO:0004618">
    <property type="term" value="F:phosphoglycerate kinase activity"/>
    <property type="evidence" value="ECO:0007669"/>
    <property type="project" value="UniProtKB-UniRule"/>
</dbReference>
<dbReference type="GO" id="GO:0006094">
    <property type="term" value="P:gluconeogenesis"/>
    <property type="evidence" value="ECO:0007669"/>
    <property type="project" value="TreeGrafter"/>
</dbReference>
<dbReference type="GO" id="GO:0006096">
    <property type="term" value="P:glycolytic process"/>
    <property type="evidence" value="ECO:0007669"/>
    <property type="project" value="UniProtKB-UniRule"/>
</dbReference>
<dbReference type="CDD" id="cd00318">
    <property type="entry name" value="Phosphoglycerate_kinase"/>
    <property type="match status" value="1"/>
</dbReference>
<dbReference type="FunFam" id="3.40.50.1260:FF:000001">
    <property type="entry name" value="Phosphoglycerate kinase"/>
    <property type="match status" value="1"/>
</dbReference>
<dbReference type="FunFam" id="3.40.50.1260:FF:000002">
    <property type="entry name" value="Phosphoglycerate kinase"/>
    <property type="match status" value="1"/>
</dbReference>
<dbReference type="Gene3D" id="3.40.50.1260">
    <property type="entry name" value="Phosphoglycerate kinase, N-terminal domain"/>
    <property type="match status" value="2"/>
</dbReference>
<dbReference type="HAMAP" id="MF_00145">
    <property type="entry name" value="Phosphoglyc_kinase"/>
    <property type="match status" value="1"/>
</dbReference>
<dbReference type="InterPro" id="IPR001576">
    <property type="entry name" value="Phosphoglycerate_kinase"/>
</dbReference>
<dbReference type="InterPro" id="IPR015911">
    <property type="entry name" value="Phosphoglycerate_kinase_CS"/>
</dbReference>
<dbReference type="InterPro" id="IPR015824">
    <property type="entry name" value="Phosphoglycerate_kinase_N"/>
</dbReference>
<dbReference type="InterPro" id="IPR036043">
    <property type="entry name" value="Phosphoglycerate_kinase_sf"/>
</dbReference>
<dbReference type="PANTHER" id="PTHR11406">
    <property type="entry name" value="PHOSPHOGLYCERATE KINASE"/>
    <property type="match status" value="1"/>
</dbReference>
<dbReference type="PANTHER" id="PTHR11406:SF23">
    <property type="entry name" value="PHOSPHOGLYCERATE KINASE 1, CHLOROPLASTIC-RELATED"/>
    <property type="match status" value="1"/>
</dbReference>
<dbReference type="Pfam" id="PF00162">
    <property type="entry name" value="PGK"/>
    <property type="match status" value="1"/>
</dbReference>
<dbReference type="PIRSF" id="PIRSF000724">
    <property type="entry name" value="Pgk"/>
    <property type="match status" value="1"/>
</dbReference>
<dbReference type="PRINTS" id="PR00477">
    <property type="entry name" value="PHGLYCKINASE"/>
</dbReference>
<dbReference type="SUPFAM" id="SSF53748">
    <property type="entry name" value="Phosphoglycerate kinase"/>
    <property type="match status" value="1"/>
</dbReference>
<dbReference type="PROSITE" id="PS00111">
    <property type="entry name" value="PGLYCERATE_KINASE"/>
    <property type="match status" value="1"/>
</dbReference>
<gene>
    <name evidence="1" type="primary">pgk</name>
    <name type="ordered locus">MCA2021</name>
</gene>